<sequence length="213" mass="23509">MISITPEILVRAYASGVFPMARAHDDPQLYWIDPDERGVLPLDGLHVSRSLRKVLRHCPFTVTIDTVFVEVLKQCAAPVPGRDETWINAEIEHLFTDLFDLGLGHSVECWQGDQLVGGLYGLAMGGVFFGESMFSRVDNASKVALCHLVARLKRGGFRLLDTQFTTNHLRSMGAVEIARPLYHARLGNALQVMGDFTVDVPDVLAALDTPSGY</sequence>
<organism>
    <name type="scientific">Rhodospirillum rubrum (strain ATCC 11170 / ATH 1.1.1 / DSM 467 / LMG 4362 / NCIMB 8255 / S1)</name>
    <dbReference type="NCBI Taxonomy" id="269796"/>
    <lineage>
        <taxon>Bacteria</taxon>
        <taxon>Pseudomonadati</taxon>
        <taxon>Pseudomonadota</taxon>
        <taxon>Alphaproteobacteria</taxon>
        <taxon>Rhodospirillales</taxon>
        <taxon>Rhodospirillaceae</taxon>
        <taxon>Rhodospirillum</taxon>
    </lineage>
</organism>
<dbReference type="EC" id="2.3.2.6" evidence="1"/>
<dbReference type="EMBL" id="CP000230">
    <property type="protein sequence ID" value="ABC23236.1"/>
    <property type="molecule type" value="Genomic_DNA"/>
</dbReference>
<dbReference type="RefSeq" id="WP_011390189.1">
    <property type="nucleotide sequence ID" value="NC_007643.1"/>
</dbReference>
<dbReference type="RefSeq" id="YP_427523.1">
    <property type="nucleotide sequence ID" value="NC_007643.1"/>
</dbReference>
<dbReference type="SMR" id="Q2RRK9"/>
<dbReference type="STRING" id="269796.Rru_A2436"/>
<dbReference type="EnsemblBacteria" id="ABC23236">
    <property type="protein sequence ID" value="ABC23236"/>
    <property type="gene ID" value="Rru_A2436"/>
</dbReference>
<dbReference type="KEGG" id="rru:Rru_A2436"/>
<dbReference type="PATRIC" id="fig|269796.9.peg.2540"/>
<dbReference type="eggNOG" id="COG2360">
    <property type="taxonomic scope" value="Bacteria"/>
</dbReference>
<dbReference type="HOGENOM" id="CLU_075045_1_1_5"/>
<dbReference type="PhylomeDB" id="Q2RRK9"/>
<dbReference type="Proteomes" id="UP000001929">
    <property type="component" value="Chromosome"/>
</dbReference>
<dbReference type="GO" id="GO:0005737">
    <property type="term" value="C:cytoplasm"/>
    <property type="evidence" value="ECO:0007669"/>
    <property type="project" value="UniProtKB-SubCell"/>
</dbReference>
<dbReference type="GO" id="GO:0008914">
    <property type="term" value="F:leucyl-tRNA--protein transferase activity"/>
    <property type="evidence" value="ECO:0007669"/>
    <property type="project" value="UniProtKB-UniRule"/>
</dbReference>
<dbReference type="GO" id="GO:0030163">
    <property type="term" value="P:protein catabolic process"/>
    <property type="evidence" value="ECO:0007669"/>
    <property type="project" value="UniProtKB-UniRule"/>
</dbReference>
<dbReference type="FunFam" id="3.40.630.70:FF:000001">
    <property type="entry name" value="Leucyl/phenylalanyl-tRNA--protein transferase"/>
    <property type="match status" value="1"/>
</dbReference>
<dbReference type="Gene3D" id="3.40.630.70">
    <property type="entry name" value="Leucyl/phenylalanyl-tRNA-protein transferase, C-terminal domain"/>
    <property type="match status" value="1"/>
</dbReference>
<dbReference type="HAMAP" id="MF_00688">
    <property type="entry name" value="Leu_Phe_trans"/>
    <property type="match status" value="1"/>
</dbReference>
<dbReference type="InterPro" id="IPR016181">
    <property type="entry name" value="Acyl_CoA_acyltransferase"/>
</dbReference>
<dbReference type="InterPro" id="IPR004616">
    <property type="entry name" value="Leu/Phe-tRNA_Trfase"/>
</dbReference>
<dbReference type="InterPro" id="IPR042203">
    <property type="entry name" value="Leu/Phe-tRNA_Trfase_C"/>
</dbReference>
<dbReference type="NCBIfam" id="TIGR00667">
    <property type="entry name" value="aat"/>
    <property type="match status" value="1"/>
</dbReference>
<dbReference type="PANTHER" id="PTHR30098">
    <property type="entry name" value="LEUCYL/PHENYLALANYL-TRNA--PROTEIN TRANSFERASE"/>
    <property type="match status" value="1"/>
</dbReference>
<dbReference type="PANTHER" id="PTHR30098:SF2">
    <property type="entry name" value="LEUCYL_PHENYLALANYL-TRNA--PROTEIN TRANSFERASE"/>
    <property type="match status" value="1"/>
</dbReference>
<dbReference type="Pfam" id="PF03588">
    <property type="entry name" value="Leu_Phe_trans"/>
    <property type="match status" value="1"/>
</dbReference>
<dbReference type="SUPFAM" id="SSF55729">
    <property type="entry name" value="Acyl-CoA N-acyltransferases (Nat)"/>
    <property type="match status" value="1"/>
</dbReference>
<proteinExistence type="inferred from homology"/>
<feature type="chain" id="PRO_0000258091" description="Leucyl/phenylalanyl-tRNA--protein transferase">
    <location>
        <begin position="1"/>
        <end position="213"/>
    </location>
</feature>
<protein>
    <recommendedName>
        <fullName evidence="1">Leucyl/phenylalanyl-tRNA--protein transferase</fullName>
        <ecNumber evidence="1">2.3.2.6</ecNumber>
    </recommendedName>
    <alternativeName>
        <fullName evidence="1">L/F-transferase</fullName>
    </alternativeName>
    <alternativeName>
        <fullName evidence="1">Leucyltransferase</fullName>
    </alternativeName>
    <alternativeName>
        <fullName evidence="1">Phenyalanyltransferase</fullName>
    </alternativeName>
</protein>
<gene>
    <name evidence="1" type="primary">aat</name>
    <name type="ordered locus">Rru_A2436</name>
</gene>
<name>LFTR_RHORT</name>
<accession>Q2RRK9</accession>
<keyword id="KW-0012">Acyltransferase</keyword>
<keyword id="KW-0963">Cytoplasm</keyword>
<keyword id="KW-1185">Reference proteome</keyword>
<keyword id="KW-0808">Transferase</keyword>
<evidence type="ECO:0000255" key="1">
    <source>
        <dbReference type="HAMAP-Rule" id="MF_00688"/>
    </source>
</evidence>
<comment type="function">
    <text evidence="1">Functions in the N-end rule pathway of protein degradation where it conjugates Leu, Phe and, less efficiently, Met from aminoacyl-tRNAs to the N-termini of proteins containing an N-terminal arginine or lysine.</text>
</comment>
<comment type="catalytic activity">
    <reaction evidence="1">
        <text>N-terminal L-lysyl-[protein] + L-leucyl-tRNA(Leu) = N-terminal L-leucyl-L-lysyl-[protein] + tRNA(Leu) + H(+)</text>
        <dbReference type="Rhea" id="RHEA:12340"/>
        <dbReference type="Rhea" id="RHEA-COMP:9613"/>
        <dbReference type="Rhea" id="RHEA-COMP:9622"/>
        <dbReference type="Rhea" id="RHEA-COMP:12670"/>
        <dbReference type="Rhea" id="RHEA-COMP:12671"/>
        <dbReference type="ChEBI" id="CHEBI:15378"/>
        <dbReference type="ChEBI" id="CHEBI:65249"/>
        <dbReference type="ChEBI" id="CHEBI:78442"/>
        <dbReference type="ChEBI" id="CHEBI:78494"/>
        <dbReference type="ChEBI" id="CHEBI:133043"/>
        <dbReference type="EC" id="2.3.2.6"/>
    </reaction>
</comment>
<comment type="catalytic activity">
    <reaction evidence="1">
        <text>N-terminal L-arginyl-[protein] + L-leucyl-tRNA(Leu) = N-terminal L-leucyl-L-arginyl-[protein] + tRNA(Leu) + H(+)</text>
        <dbReference type="Rhea" id="RHEA:50416"/>
        <dbReference type="Rhea" id="RHEA-COMP:9613"/>
        <dbReference type="Rhea" id="RHEA-COMP:9622"/>
        <dbReference type="Rhea" id="RHEA-COMP:12672"/>
        <dbReference type="Rhea" id="RHEA-COMP:12673"/>
        <dbReference type="ChEBI" id="CHEBI:15378"/>
        <dbReference type="ChEBI" id="CHEBI:64719"/>
        <dbReference type="ChEBI" id="CHEBI:78442"/>
        <dbReference type="ChEBI" id="CHEBI:78494"/>
        <dbReference type="ChEBI" id="CHEBI:133044"/>
        <dbReference type="EC" id="2.3.2.6"/>
    </reaction>
</comment>
<comment type="catalytic activity">
    <reaction evidence="1">
        <text>L-phenylalanyl-tRNA(Phe) + an N-terminal L-alpha-aminoacyl-[protein] = an N-terminal L-phenylalanyl-L-alpha-aminoacyl-[protein] + tRNA(Phe)</text>
        <dbReference type="Rhea" id="RHEA:43632"/>
        <dbReference type="Rhea" id="RHEA-COMP:9668"/>
        <dbReference type="Rhea" id="RHEA-COMP:9699"/>
        <dbReference type="Rhea" id="RHEA-COMP:10636"/>
        <dbReference type="Rhea" id="RHEA-COMP:10637"/>
        <dbReference type="ChEBI" id="CHEBI:78442"/>
        <dbReference type="ChEBI" id="CHEBI:78531"/>
        <dbReference type="ChEBI" id="CHEBI:78597"/>
        <dbReference type="ChEBI" id="CHEBI:83561"/>
        <dbReference type="EC" id="2.3.2.6"/>
    </reaction>
</comment>
<comment type="subcellular location">
    <subcellularLocation>
        <location evidence="1">Cytoplasm</location>
    </subcellularLocation>
</comment>
<comment type="similarity">
    <text evidence="1">Belongs to the L/F-transferase family.</text>
</comment>
<reference key="1">
    <citation type="journal article" date="2011" name="Stand. Genomic Sci.">
        <title>Complete genome sequence of Rhodospirillum rubrum type strain (S1).</title>
        <authorList>
            <person name="Munk A.C."/>
            <person name="Copeland A."/>
            <person name="Lucas S."/>
            <person name="Lapidus A."/>
            <person name="Del Rio T.G."/>
            <person name="Barry K."/>
            <person name="Detter J.C."/>
            <person name="Hammon N."/>
            <person name="Israni S."/>
            <person name="Pitluck S."/>
            <person name="Brettin T."/>
            <person name="Bruce D."/>
            <person name="Han C."/>
            <person name="Tapia R."/>
            <person name="Gilna P."/>
            <person name="Schmutz J."/>
            <person name="Larimer F."/>
            <person name="Land M."/>
            <person name="Kyrpides N.C."/>
            <person name="Mavromatis K."/>
            <person name="Richardson P."/>
            <person name="Rohde M."/>
            <person name="Goeker M."/>
            <person name="Klenk H.P."/>
            <person name="Zhang Y."/>
            <person name="Roberts G.P."/>
            <person name="Reslewic S."/>
            <person name="Schwartz D.C."/>
        </authorList>
    </citation>
    <scope>NUCLEOTIDE SEQUENCE [LARGE SCALE GENOMIC DNA]</scope>
    <source>
        <strain>ATCC 11170 / ATH 1.1.1 / DSM 467 / LMG 4362 / NCIMB 8255 / S1</strain>
    </source>
</reference>